<evidence type="ECO:0000250" key="1">
    <source>
        <dbReference type="UniProtKB" id="Q9UEW3"/>
    </source>
</evidence>
<evidence type="ECO:0000250" key="2">
    <source>
        <dbReference type="UniProtKB" id="Q9WUB9"/>
    </source>
</evidence>
<evidence type="ECO:0000255" key="3"/>
<evidence type="ECO:0000255" key="4">
    <source>
        <dbReference type="PROSITE-ProRule" id="PRU00196"/>
    </source>
</evidence>
<evidence type="ECO:0000256" key="5">
    <source>
        <dbReference type="SAM" id="MobiDB-lite"/>
    </source>
</evidence>
<evidence type="ECO:0000269" key="6">
    <source>
    </source>
</evidence>
<evidence type="ECO:0000269" key="7">
    <source>
    </source>
</evidence>
<evidence type="ECO:0000305" key="8"/>
<evidence type="ECO:0007829" key="9">
    <source>
        <dbReference type="PDB" id="2OYA"/>
    </source>
</evidence>
<comment type="function">
    <text evidence="1 2 7">Pattern recognition receptor (PRR) which binds Gram-positive and Gram-negative bacteria (PubMed:7867067). Also plays a role in binding of unopsonized particles by alveolar macrophages (By similarity). Binds to the secretoglobin SCGB3A2 (By similarity).</text>
</comment>
<comment type="subunit">
    <text evidence="6 7">Homotrimer; disulfide-linked (PubMed:7867067). Trimers may assemble in larger oligomers thus resulting in the creation of a large surface capable of interacting with very large ligands (PubMed:17405873).</text>
</comment>
<comment type="subcellular location">
    <subcellularLocation>
        <location evidence="7">Cell membrane</location>
        <topology evidence="8">Single-pass type II membrane protein</topology>
    </subcellularLocation>
</comment>
<comment type="tissue specificity">
    <text evidence="7">Expressed in subpopulations of macrophages in the spleen and the medullary cord of lymph nodes (at protein level).</text>
</comment>
<comment type="PTM">
    <text evidence="7">N-glycosylated.</text>
</comment>
<organism>
    <name type="scientific">Mus musculus</name>
    <name type="common">Mouse</name>
    <dbReference type="NCBI Taxonomy" id="10090"/>
    <lineage>
        <taxon>Eukaryota</taxon>
        <taxon>Metazoa</taxon>
        <taxon>Chordata</taxon>
        <taxon>Craniata</taxon>
        <taxon>Vertebrata</taxon>
        <taxon>Euteleostomi</taxon>
        <taxon>Mammalia</taxon>
        <taxon>Eutheria</taxon>
        <taxon>Euarchontoglires</taxon>
        <taxon>Glires</taxon>
        <taxon>Rodentia</taxon>
        <taxon>Myomorpha</taxon>
        <taxon>Muroidea</taxon>
        <taxon>Muridae</taxon>
        <taxon>Murinae</taxon>
        <taxon>Mus</taxon>
        <taxon>Mus</taxon>
    </lineage>
</organism>
<feature type="chain" id="PRO_0000181632" description="Macrophage receptor MARCO">
    <location>
        <begin position="1"/>
        <end position="518"/>
    </location>
</feature>
<feature type="topological domain" description="Cytoplasmic" evidence="7">
    <location>
        <begin position="1"/>
        <end position="48"/>
    </location>
</feature>
<feature type="transmembrane region" description="Helical; Signal-anchor for type II membrane protein" evidence="3">
    <location>
        <begin position="49"/>
        <end position="69"/>
    </location>
</feature>
<feature type="topological domain" description="Extracellular" evidence="7">
    <location>
        <begin position="70"/>
        <end position="518"/>
    </location>
</feature>
<feature type="domain" description="Collagen-like">
    <location>
        <begin position="149"/>
        <end position="418"/>
    </location>
</feature>
<feature type="domain" description="SRCR" evidence="4">
    <location>
        <begin position="423"/>
        <end position="518"/>
    </location>
</feature>
<feature type="region of interest" description="Disordered" evidence="5">
    <location>
        <begin position="147"/>
        <end position="426"/>
    </location>
</feature>
<feature type="compositionally biased region" description="Low complexity" evidence="5">
    <location>
        <begin position="154"/>
        <end position="163"/>
    </location>
</feature>
<feature type="compositionally biased region" description="Basic and acidic residues" evidence="5">
    <location>
        <begin position="239"/>
        <end position="250"/>
    </location>
</feature>
<feature type="compositionally biased region" description="Low complexity" evidence="5">
    <location>
        <begin position="293"/>
        <end position="314"/>
    </location>
</feature>
<feature type="compositionally biased region" description="Low complexity" evidence="5">
    <location>
        <begin position="325"/>
        <end position="344"/>
    </location>
</feature>
<feature type="compositionally biased region" description="Basic and acidic residues" evidence="5">
    <location>
        <begin position="410"/>
        <end position="421"/>
    </location>
</feature>
<feature type="glycosylation site" description="N-linked (GlcNAc...) asparagine" evidence="3">
    <location>
        <position position="87"/>
    </location>
</feature>
<feature type="glycosylation site" description="N-linked (GlcNAc...) asparagine" evidence="3">
    <location>
        <position position="138"/>
    </location>
</feature>
<feature type="disulfide bond" evidence="4">
    <location>
        <begin position="446"/>
        <end position="507"/>
    </location>
</feature>
<feature type="disulfide bond" evidence="4">
    <location>
        <begin position="459"/>
        <end position="517"/>
    </location>
</feature>
<feature type="disulfide bond" evidence="4">
    <location>
        <begin position="487"/>
        <end position="497"/>
    </location>
</feature>
<feature type="strand" evidence="9">
    <location>
        <begin position="422"/>
        <end position="438"/>
    </location>
</feature>
<feature type="strand" evidence="9">
    <location>
        <begin position="441"/>
        <end position="446"/>
    </location>
</feature>
<feature type="helix" evidence="9">
    <location>
        <begin position="452"/>
        <end position="461"/>
    </location>
</feature>
<feature type="strand" evidence="9">
    <location>
        <begin position="465"/>
        <end position="470"/>
    </location>
</feature>
<feature type="strand" evidence="9">
    <location>
        <begin position="480"/>
        <end position="482"/>
    </location>
</feature>
<feature type="helix" evidence="9">
    <location>
        <begin position="494"/>
        <end position="496"/>
    </location>
</feature>
<feature type="helix" evidence="9">
    <location>
        <begin position="509"/>
        <end position="511"/>
    </location>
</feature>
<feature type="strand" evidence="9">
    <location>
        <begin position="514"/>
        <end position="518"/>
    </location>
</feature>
<protein>
    <recommendedName>
        <fullName>Macrophage receptor MARCO</fullName>
    </recommendedName>
    <alternativeName>
        <fullName>Macrophage receptor with collagenous structure</fullName>
    </alternativeName>
</protein>
<proteinExistence type="evidence at protein level"/>
<name>MARCO_MOUSE</name>
<keyword id="KW-0002">3D-structure</keyword>
<keyword id="KW-1003">Cell membrane</keyword>
<keyword id="KW-0176">Collagen</keyword>
<keyword id="KW-1015">Disulfide bond</keyword>
<keyword id="KW-0325">Glycoprotein</keyword>
<keyword id="KW-0391">Immunity</keyword>
<keyword id="KW-0399">Innate immunity</keyword>
<keyword id="KW-0472">Membrane</keyword>
<keyword id="KW-0675">Receptor</keyword>
<keyword id="KW-1185">Reference proteome</keyword>
<keyword id="KW-0735">Signal-anchor</keyword>
<keyword id="KW-0812">Transmembrane</keyword>
<keyword id="KW-1133">Transmembrane helix</keyword>
<reference key="1">
    <citation type="journal article" date="1995" name="Cell">
        <title>Cloning of a novel bacteria-binding receptor structurally related to scavenger receptors and expressed in a subset of macrophages.</title>
        <authorList>
            <person name="Elomaa O."/>
            <person name="Kangas M."/>
            <person name="Sahlberg C."/>
            <person name="Tuukkanen J."/>
            <person name="Sormunen R."/>
            <person name="Liakka A."/>
            <person name="Thesleff I."/>
            <person name="Kraal G."/>
            <person name="Tryggvason K."/>
        </authorList>
    </citation>
    <scope>NUCLEOTIDE SEQUENCE [MRNA]</scope>
    <scope>FUNCTION</scope>
    <scope>SUBUNIT</scope>
    <scope>SUBCELLULAR LOCATION</scope>
    <scope>TISSUE SPECIFICITY</scope>
    <scope>GLYCOSYLATION</scope>
    <scope>TOPOLOGY</scope>
</reference>
<reference key="2">
    <citation type="journal article" date="1999" name="Genomics">
        <title>Structure and chromosomal localization of the human and murine genes for the macrophage MARCO receptor.</title>
        <authorList>
            <person name="Kangas M."/>
            <person name="Brannstrom A."/>
            <person name="Elomaa O."/>
            <person name="Matsuda Y."/>
            <person name="Eddy R."/>
            <person name="Shows T.B."/>
            <person name="Tryggvason K."/>
        </authorList>
    </citation>
    <scope>NUCLEOTIDE SEQUENCE [GENOMIC DNA]</scope>
</reference>
<reference key="3">
    <citation type="journal article" date="2010" name="Cell">
        <title>A tissue-specific atlas of mouse protein phosphorylation and expression.</title>
        <authorList>
            <person name="Huttlin E.L."/>
            <person name="Jedrychowski M.P."/>
            <person name="Elias J.E."/>
            <person name="Goswami T."/>
            <person name="Rad R."/>
            <person name="Beausoleil S.A."/>
            <person name="Villen J."/>
            <person name="Haas W."/>
            <person name="Sowa M.E."/>
            <person name="Gygi S.P."/>
        </authorList>
    </citation>
    <scope>IDENTIFICATION BY MASS SPECTROMETRY [LARGE SCALE ANALYSIS]</scope>
    <source>
        <tissue>Spleen</tissue>
    </source>
</reference>
<reference key="4">
    <citation type="journal article" date="2007" name="J. Biol. Chem.">
        <title>Crystal structure of the cysteine-rich domain of scavenger receptor MARCO reveals the presence of a basic and an acidic cluster that both contribute to ligand recognition.</title>
        <authorList>
            <person name="Ojala J.R."/>
            <person name="Pikkarainen T."/>
            <person name="Tuuttila A."/>
            <person name="Sandalova T."/>
            <person name="Tryggvason K."/>
        </authorList>
    </citation>
    <scope>X-RAY CRYSTALLOGRAPHY (1.77 ANGSTROMS) OF 421-518</scope>
    <scope>SUBUNIT</scope>
    <scope>DISULFIDE BONDS</scope>
</reference>
<gene>
    <name type="primary">Marco</name>
</gene>
<dbReference type="EMBL" id="U18424">
    <property type="protein sequence ID" value="AAA68638.1"/>
    <property type="molecule type" value="mRNA"/>
</dbReference>
<dbReference type="EMBL" id="AF128423">
    <property type="protein sequence ID" value="AAD51136.1"/>
    <property type="molecule type" value="Genomic_DNA"/>
</dbReference>
<dbReference type="EMBL" id="AF127927">
    <property type="protein sequence ID" value="AAD51136.1"/>
    <property type="status" value="JOINED"/>
    <property type="molecule type" value="Genomic_DNA"/>
</dbReference>
<dbReference type="EMBL" id="AF127928">
    <property type="protein sequence ID" value="AAD51136.1"/>
    <property type="status" value="JOINED"/>
    <property type="molecule type" value="Genomic_DNA"/>
</dbReference>
<dbReference type="EMBL" id="AF128169">
    <property type="protein sequence ID" value="AAD51136.1"/>
    <property type="status" value="JOINED"/>
    <property type="molecule type" value="Genomic_DNA"/>
</dbReference>
<dbReference type="EMBL" id="AF128170">
    <property type="protein sequence ID" value="AAD51136.1"/>
    <property type="status" value="JOINED"/>
    <property type="molecule type" value="Genomic_DNA"/>
</dbReference>
<dbReference type="EMBL" id="AF128171">
    <property type="protein sequence ID" value="AAD51136.1"/>
    <property type="status" value="JOINED"/>
    <property type="molecule type" value="Genomic_DNA"/>
</dbReference>
<dbReference type="EMBL" id="AF127601">
    <property type="protein sequence ID" value="AAD51136.1"/>
    <property type="status" value="JOINED"/>
    <property type="molecule type" value="Genomic_DNA"/>
</dbReference>
<dbReference type="EMBL" id="AF127602">
    <property type="protein sequence ID" value="AAD51136.1"/>
    <property type="status" value="JOINED"/>
    <property type="molecule type" value="Genomic_DNA"/>
</dbReference>
<dbReference type="EMBL" id="AF128419">
    <property type="protein sequence ID" value="AAD51136.1"/>
    <property type="status" value="JOINED"/>
    <property type="molecule type" value="Genomic_DNA"/>
</dbReference>
<dbReference type="EMBL" id="AF128420">
    <property type="protein sequence ID" value="AAD51136.1"/>
    <property type="status" value="JOINED"/>
    <property type="molecule type" value="Genomic_DNA"/>
</dbReference>
<dbReference type="EMBL" id="AF128421">
    <property type="protein sequence ID" value="AAD51136.1"/>
    <property type="status" value="JOINED"/>
    <property type="molecule type" value="Genomic_DNA"/>
</dbReference>
<dbReference type="EMBL" id="AF128422">
    <property type="protein sequence ID" value="AAD51136.1"/>
    <property type="status" value="JOINED"/>
    <property type="molecule type" value="Genomic_DNA"/>
</dbReference>
<dbReference type="CCDS" id="CCDS15234.1"/>
<dbReference type="PIR" id="A55840">
    <property type="entry name" value="A55840"/>
</dbReference>
<dbReference type="RefSeq" id="NP_034896.1">
    <property type="nucleotide sequence ID" value="NM_010766.3"/>
</dbReference>
<dbReference type="PDB" id="2OY3">
    <property type="method" value="X-ray"/>
    <property type="resolution" value="1.78 A"/>
    <property type="chains" value="A=421-518"/>
</dbReference>
<dbReference type="PDB" id="2OYA">
    <property type="method" value="X-ray"/>
    <property type="resolution" value="1.77 A"/>
    <property type="chains" value="A/B=421-518"/>
</dbReference>
<dbReference type="PDBsum" id="2OY3"/>
<dbReference type="PDBsum" id="2OYA"/>
<dbReference type="SMR" id="Q60754"/>
<dbReference type="FunCoup" id="Q60754">
    <property type="interactions" value="206"/>
</dbReference>
<dbReference type="STRING" id="10090.ENSMUSP00000027639"/>
<dbReference type="GlyCosmos" id="Q60754">
    <property type="glycosylation" value="2 sites, No reported glycans"/>
</dbReference>
<dbReference type="GlyGen" id="Q60754">
    <property type="glycosylation" value="2 sites"/>
</dbReference>
<dbReference type="PhosphoSitePlus" id="Q60754"/>
<dbReference type="CPTAC" id="non-CPTAC-3472"/>
<dbReference type="PaxDb" id="10090-ENSMUSP00000027639"/>
<dbReference type="ProteomicsDB" id="292168"/>
<dbReference type="Antibodypedia" id="41307">
    <property type="antibodies" value="252 antibodies from 28 providers"/>
</dbReference>
<dbReference type="DNASU" id="17167"/>
<dbReference type="Ensembl" id="ENSMUST00000027639.8">
    <property type="protein sequence ID" value="ENSMUSP00000027639.2"/>
    <property type="gene ID" value="ENSMUSG00000026390.8"/>
</dbReference>
<dbReference type="GeneID" id="17167"/>
<dbReference type="KEGG" id="mmu:17167"/>
<dbReference type="UCSC" id="uc007cjl.1">
    <property type="organism name" value="mouse"/>
</dbReference>
<dbReference type="AGR" id="MGI:1309998"/>
<dbReference type="CTD" id="8685"/>
<dbReference type="MGI" id="MGI:1309998">
    <property type="gene designation" value="Marco"/>
</dbReference>
<dbReference type="VEuPathDB" id="HostDB:ENSMUSG00000026390"/>
<dbReference type="eggNOG" id="ENOG502QWN1">
    <property type="taxonomic scope" value="Eukaryota"/>
</dbReference>
<dbReference type="GeneTree" id="ENSGT00950000183074"/>
<dbReference type="HOGENOM" id="CLU_039737_0_0_1"/>
<dbReference type="InParanoid" id="Q60754"/>
<dbReference type="OMA" id="GMFGIKG"/>
<dbReference type="OrthoDB" id="10037288at2759"/>
<dbReference type="PhylomeDB" id="Q60754"/>
<dbReference type="TreeFam" id="TF330855"/>
<dbReference type="Reactome" id="R-MMU-3000480">
    <property type="pathway name" value="Scavenging by Class A Receptors"/>
</dbReference>
<dbReference type="BioGRID-ORCS" id="17167">
    <property type="hits" value="3 hits in 77 CRISPR screens"/>
</dbReference>
<dbReference type="EvolutionaryTrace" id="Q60754"/>
<dbReference type="PRO" id="PR:Q60754"/>
<dbReference type="Proteomes" id="UP000000589">
    <property type="component" value="Chromosome 1"/>
</dbReference>
<dbReference type="RNAct" id="Q60754">
    <property type="molecule type" value="protein"/>
</dbReference>
<dbReference type="Bgee" id="ENSMUSG00000026390">
    <property type="expression patterns" value="Expressed in stroma of bone marrow and 56 other cell types or tissues"/>
</dbReference>
<dbReference type="ExpressionAtlas" id="Q60754">
    <property type="expression patterns" value="baseline and differential"/>
</dbReference>
<dbReference type="GO" id="GO:0005581">
    <property type="term" value="C:collagen trimer"/>
    <property type="evidence" value="ECO:0007669"/>
    <property type="project" value="UniProtKB-KW"/>
</dbReference>
<dbReference type="GO" id="GO:0005737">
    <property type="term" value="C:cytoplasm"/>
    <property type="evidence" value="ECO:0007669"/>
    <property type="project" value="Ensembl"/>
</dbReference>
<dbReference type="GO" id="GO:0005886">
    <property type="term" value="C:plasma membrane"/>
    <property type="evidence" value="ECO:0000304"/>
    <property type="project" value="Reactome"/>
</dbReference>
<dbReference type="GO" id="GO:0001540">
    <property type="term" value="F:amyloid-beta binding"/>
    <property type="evidence" value="ECO:0007669"/>
    <property type="project" value="Ensembl"/>
</dbReference>
<dbReference type="GO" id="GO:0038024">
    <property type="term" value="F:cargo receptor activity"/>
    <property type="evidence" value="ECO:0007669"/>
    <property type="project" value="Ensembl"/>
</dbReference>
<dbReference type="GO" id="GO:0001664">
    <property type="term" value="F:G protein-coupled receptor binding"/>
    <property type="evidence" value="ECO:0007669"/>
    <property type="project" value="Ensembl"/>
</dbReference>
<dbReference type="GO" id="GO:0007193">
    <property type="term" value="P:adenylate cyclase-inhibiting G protein-coupled receptor signaling pathway"/>
    <property type="evidence" value="ECO:0007669"/>
    <property type="project" value="Ensembl"/>
</dbReference>
<dbReference type="GO" id="GO:0097242">
    <property type="term" value="P:amyloid-beta clearance"/>
    <property type="evidence" value="ECO:0007669"/>
    <property type="project" value="Ensembl"/>
</dbReference>
<dbReference type="GO" id="GO:0043277">
    <property type="term" value="P:apoptotic cell clearance"/>
    <property type="evidence" value="ECO:0000315"/>
    <property type="project" value="MGI"/>
</dbReference>
<dbReference type="GO" id="GO:0006897">
    <property type="term" value="P:endocytosis"/>
    <property type="evidence" value="ECO:0000315"/>
    <property type="project" value="MGI"/>
</dbReference>
<dbReference type="GO" id="GO:0045087">
    <property type="term" value="P:innate immune response"/>
    <property type="evidence" value="ECO:0007669"/>
    <property type="project" value="UniProtKB-KW"/>
</dbReference>
<dbReference type="GO" id="GO:0006911">
    <property type="term" value="P:phagocytosis, engulfment"/>
    <property type="evidence" value="ECO:0007669"/>
    <property type="project" value="Ensembl"/>
</dbReference>
<dbReference type="GO" id="GO:0070374">
    <property type="term" value="P:positive regulation of ERK1 and ERK2 cascade"/>
    <property type="evidence" value="ECO:0007669"/>
    <property type="project" value="Ensembl"/>
</dbReference>
<dbReference type="GO" id="GO:0006898">
    <property type="term" value="P:receptor-mediated endocytosis"/>
    <property type="evidence" value="ECO:0007669"/>
    <property type="project" value="Ensembl"/>
</dbReference>
<dbReference type="FunFam" id="3.10.250.10:FF:000011">
    <property type="entry name" value="Scavenger receptor class A member 5"/>
    <property type="match status" value="1"/>
</dbReference>
<dbReference type="Gene3D" id="3.10.250.10">
    <property type="entry name" value="SRCR-like domain"/>
    <property type="match status" value="1"/>
</dbReference>
<dbReference type="InterPro" id="IPR008160">
    <property type="entry name" value="Collagen"/>
</dbReference>
<dbReference type="InterPro" id="IPR001190">
    <property type="entry name" value="SRCR"/>
</dbReference>
<dbReference type="InterPro" id="IPR036772">
    <property type="entry name" value="SRCR-like_dom_sf"/>
</dbReference>
<dbReference type="PANTHER" id="PTHR24637">
    <property type="entry name" value="COLLAGEN"/>
    <property type="match status" value="1"/>
</dbReference>
<dbReference type="Pfam" id="PF01391">
    <property type="entry name" value="Collagen"/>
    <property type="match status" value="3"/>
</dbReference>
<dbReference type="Pfam" id="PF00530">
    <property type="entry name" value="SRCR"/>
    <property type="match status" value="1"/>
</dbReference>
<dbReference type="PRINTS" id="PR00258">
    <property type="entry name" value="SPERACTRCPTR"/>
</dbReference>
<dbReference type="SMART" id="SM00202">
    <property type="entry name" value="SR"/>
    <property type="match status" value="1"/>
</dbReference>
<dbReference type="SUPFAM" id="SSF56487">
    <property type="entry name" value="SRCR-like"/>
    <property type="match status" value="1"/>
</dbReference>
<dbReference type="PROSITE" id="PS00420">
    <property type="entry name" value="SRCR_1"/>
    <property type="match status" value="1"/>
</dbReference>
<dbReference type="PROSITE" id="PS50287">
    <property type="entry name" value="SRCR_2"/>
    <property type="match status" value="1"/>
</dbReference>
<accession>Q60754</accession>
<sequence>MGSKELLKEEDFLGSTEDRADFDQAMFPVMETFEINDPVPKKRNGGTFCMAVMAIHLILLTAGTALLLIQVLNLQEQLQMLEMCCGNGSLAIEDKPFFSLQWAPKTHLVPRAQGLQALQAQLSWVHTSQEQLRQQFNNLTQNPELFQIKGERGSPGPKGAPGAPGIPGLPGPAAEKGEKGAAGRDGTPGVQGPQGPPGSKGEAGLQGLTGAPGKQGATGAPGPRGEKGSKGDIGLTGPKGEHGTKGDKGDLGLPGNKGDMGMKGDTGPMGSPGAQGGKGDAGKPGLPGLAGSPGVKGDQGKPGVQGVPGPQGAPGLSGAKGEPGRTGLPGPAGPPGIAGNPGIAGVKGSKGDTGIQGQKGTKGESGVPGLVGRKGDTGSPGLAGPKGEPGRVGQKGDPGMKGSSGQQGQKGEKGQKGESFQRVRIMGGTNRGRAEVYYNNEWGTICDDDWDNNDATVFCRMLGYSRGRALSSYGGGSGNIWLDNVNCRGTENSLWDCSKNSWGNHNCVHNEDAGVECS</sequence>